<keyword id="KW-0456">Lyase</keyword>
<keyword id="KW-0460">Magnesium</keyword>
<keyword id="KW-0479">Metal-binding</keyword>
<comment type="function">
    <text evidence="1">Catalyzes the reversible retro-aldol cleavage of both 5-keto-4-deoxy-D-glucarate and 2-keto-3-deoxy-D-glucarate to pyruvate and tartronic semialdehyde.</text>
</comment>
<comment type="catalytic activity">
    <reaction evidence="1">
        <text>5-dehydro-4-deoxy-D-glucarate = 2-hydroxy-3-oxopropanoate + pyruvate</text>
        <dbReference type="Rhea" id="RHEA:27726"/>
        <dbReference type="ChEBI" id="CHEBI:15361"/>
        <dbReference type="ChEBI" id="CHEBI:42819"/>
        <dbReference type="ChEBI" id="CHEBI:57978"/>
    </reaction>
</comment>
<comment type="catalytic activity">
    <reaction evidence="1">
        <text>2-dehydro-3-deoxy-D-glucarate = 2-hydroxy-3-oxopropanoate + pyruvate</text>
        <dbReference type="Rhea" id="RHEA:10268"/>
        <dbReference type="ChEBI" id="CHEBI:15361"/>
        <dbReference type="ChEBI" id="CHEBI:57978"/>
        <dbReference type="ChEBI" id="CHEBI:58098"/>
        <dbReference type="EC" id="4.1.2.20"/>
    </reaction>
</comment>
<comment type="cofactor">
    <cofactor evidence="1">
        <name>Mg(2+)</name>
        <dbReference type="ChEBI" id="CHEBI:18420"/>
    </cofactor>
    <text evidence="1">Binds 1 Mg(2+) ion per subunit.</text>
</comment>
<comment type="pathway">
    <text evidence="1">Carbohydrate acid metabolism; galactarate degradation; D-glycerate from galactarate: step 2/3.</text>
</comment>
<comment type="subunit">
    <text evidence="1">Homohexamer; trimer of dimers.</text>
</comment>
<comment type="similarity">
    <text evidence="1">Belongs to the HpcH/HpaI aldolase family. KDGluc aldolase subfamily.</text>
</comment>
<evidence type="ECO:0000255" key="1">
    <source>
        <dbReference type="HAMAP-Rule" id="MF_01291"/>
    </source>
</evidence>
<proteinExistence type="inferred from homology"/>
<sequence>MNNDVFPNKFKAALAAKQVQIGCWSALSNPISTEVLGLAGFDWLVLDGEHAPNDISTFIPQLMALKGSASAPVVRVPTNEPVIIKRLLDIGFYNFLIPFVETKEEAELAVASTRYPPEGIRGVSVSHRANMFGTVADYFAQSNKNITILVQIESQQGVDNVDAIAATEGVDGIFVGPSDLAAALGHLGNASHPDVQKAIQHIFNRASAHGKPSGILAPVEADARRYLEWGATFVAVGSDLGVFRSATQKLADTFKK</sequence>
<name>GARL_ECODH</name>
<organism>
    <name type="scientific">Escherichia coli (strain K12 / DH10B)</name>
    <dbReference type="NCBI Taxonomy" id="316385"/>
    <lineage>
        <taxon>Bacteria</taxon>
        <taxon>Pseudomonadati</taxon>
        <taxon>Pseudomonadota</taxon>
        <taxon>Gammaproteobacteria</taxon>
        <taxon>Enterobacterales</taxon>
        <taxon>Enterobacteriaceae</taxon>
        <taxon>Escherichia</taxon>
    </lineage>
</organism>
<dbReference type="EC" id="4.1.2.20" evidence="1"/>
<dbReference type="EMBL" id="CP000948">
    <property type="protein sequence ID" value="ACB04206.1"/>
    <property type="molecule type" value="Genomic_DNA"/>
</dbReference>
<dbReference type="RefSeq" id="WP_001058209.1">
    <property type="nucleotide sequence ID" value="NC_010473.1"/>
</dbReference>
<dbReference type="SMR" id="B1XGT9"/>
<dbReference type="KEGG" id="ecd:ECDH10B_3299"/>
<dbReference type="HOGENOM" id="CLU_059964_1_0_6"/>
<dbReference type="UniPathway" id="UPA00565">
    <property type="reaction ID" value="UER00630"/>
</dbReference>
<dbReference type="GO" id="GO:0005737">
    <property type="term" value="C:cytoplasm"/>
    <property type="evidence" value="ECO:0007669"/>
    <property type="project" value="TreeGrafter"/>
</dbReference>
<dbReference type="GO" id="GO:0008672">
    <property type="term" value="F:2-dehydro-3-deoxyglucarate aldolase activity"/>
    <property type="evidence" value="ECO:0007669"/>
    <property type="project" value="UniProtKB-UniRule"/>
</dbReference>
<dbReference type="GO" id="GO:0000287">
    <property type="term" value="F:magnesium ion binding"/>
    <property type="evidence" value="ECO:0007669"/>
    <property type="project" value="UniProtKB-UniRule"/>
</dbReference>
<dbReference type="GO" id="GO:0042838">
    <property type="term" value="P:D-glucarate catabolic process"/>
    <property type="evidence" value="ECO:0007669"/>
    <property type="project" value="UniProtKB-UniRule"/>
</dbReference>
<dbReference type="GO" id="GO:0046392">
    <property type="term" value="P:galactarate catabolic process"/>
    <property type="evidence" value="ECO:0007669"/>
    <property type="project" value="UniProtKB-UniRule"/>
</dbReference>
<dbReference type="FunFam" id="3.20.20.60:FF:000004">
    <property type="entry name" value="5-keto-4-deoxy-D-glucarate aldolase"/>
    <property type="match status" value="1"/>
</dbReference>
<dbReference type="Gene3D" id="3.20.20.60">
    <property type="entry name" value="Phosphoenolpyruvate-binding domains"/>
    <property type="match status" value="1"/>
</dbReference>
<dbReference type="HAMAP" id="MF_01291">
    <property type="entry name" value="KDGluc_aldolase"/>
    <property type="match status" value="1"/>
</dbReference>
<dbReference type="InterPro" id="IPR005000">
    <property type="entry name" value="Aldolase/citrate-lyase_domain"/>
</dbReference>
<dbReference type="InterPro" id="IPR017648">
    <property type="entry name" value="GarL"/>
</dbReference>
<dbReference type="InterPro" id="IPR050251">
    <property type="entry name" value="HpcH-HpaI_aldolase"/>
</dbReference>
<dbReference type="InterPro" id="IPR015813">
    <property type="entry name" value="Pyrv/PenolPyrv_kinase-like_dom"/>
</dbReference>
<dbReference type="InterPro" id="IPR040442">
    <property type="entry name" value="Pyrv_kinase-like_dom_sf"/>
</dbReference>
<dbReference type="NCBIfam" id="TIGR03239">
    <property type="entry name" value="GarL"/>
    <property type="match status" value="1"/>
</dbReference>
<dbReference type="NCBIfam" id="NF007849">
    <property type="entry name" value="PRK10558.1"/>
    <property type="match status" value="1"/>
</dbReference>
<dbReference type="PANTHER" id="PTHR30502">
    <property type="entry name" value="2-KETO-3-DEOXY-L-RHAMNONATE ALDOLASE"/>
    <property type="match status" value="1"/>
</dbReference>
<dbReference type="PANTHER" id="PTHR30502:SF4">
    <property type="entry name" value="5-KETO-4-DEOXY-D-GLUCARATE ALDOLASE"/>
    <property type="match status" value="1"/>
</dbReference>
<dbReference type="Pfam" id="PF03328">
    <property type="entry name" value="HpcH_HpaI"/>
    <property type="match status" value="1"/>
</dbReference>
<dbReference type="SUPFAM" id="SSF51621">
    <property type="entry name" value="Phosphoenolpyruvate/pyruvate domain"/>
    <property type="match status" value="1"/>
</dbReference>
<gene>
    <name evidence="1" type="primary">garL</name>
    <name type="ordered locus">ECDH10B_3299</name>
</gene>
<accession>B1XGT9</accession>
<protein>
    <recommendedName>
        <fullName evidence="1">5-keto-4-deoxy-D-glucarate aldolase</fullName>
        <shortName evidence="1">KDGluc aldolase</shortName>
        <shortName evidence="1">KDGlucA</shortName>
        <ecNumber evidence="1">4.1.2.20</ecNumber>
    </recommendedName>
    <alternativeName>
        <fullName evidence="1">2-dehydro-3-deoxy-D-glucarate aldolase</fullName>
    </alternativeName>
    <alternativeName>
        <fullName evidence="1">2-keto-3-deoxy-D-glucarate aldolase</fullName>
    </alternativeName>
    <alternativeName>
        <fullName evidence="1">5-dehydro-4-deoxy-D-glucarate aldolase</fullName>
    </alternativeName>
    <alternativeName>
        <fullName evidence="1">Alpha-keto-beta-deoxy-D-glucarate aldolase</fullName>
    </alternativeName>
</protein>
<feature type="chain" id="PRO_0000353143" description="5-keto-4-deoxy-D-glucarate aldolase">
    <location>
        <begin position="1"/>
        <end position="256"/>
    </location>
</feature>
<feature type="active site" description="Proton acceptor" evidence="1">
    <location>
        <position position="50"/>
    </location>
</feature>
<feature type="binding site" evidence="1">
    <location>
        <position position="151"/>
    </location>
    <ligand>
        <name>substrate</name>
    </ligand>
</feature>
<feature type="binding site" evidence="1">
    <location>
        <position position="153"/>
    </location>
    <ligand>
        <name>Mg(2+)</name>
        <dbReference type="ChEBI" id="CHEBI:18420"/>
    </ligand>
</feature>
<feature type="binding site" evidence="1">
    <location>
        <position position="178"/>
    </location>
    <ligand>
        <name>substrate</name>
    </ligand>
</feature>
<feature type="binding site" evidence="1">
    <location>
        <position position="179"/>
    </location>
    <ligand>
        <name>Mg(2+)</name>
        <dbReference type="ChEBI" id="CHEBI:18420"/>
    </ligand>
</feature>
<feature type="binding site" evidence="1">
    <location>
        <position position="179"/>
    </location>
    <ligand>
        <name>substrate</name>
    </ligand>
</feature>
<feature type="site" description="Transition state stabilizer" evidence="1">
    <location>
        <position position="75"/>
    </location>
</feature>
<feature type="site" description="Increases basicity of active site His" evidence="1">
    <location>
        <position position="89"/>
    </location>
</feature>
<reference key="1">
    <citation type="journal article" date="2008" name="J. Bacteriol.">
        <title>The complete genome sequence of Escherichia coli DH10B: insights into the biology of a laboratory workhorse.</title>
        <authorList>
            <person name="Durfee T."/>
            <person name="Nelson R."/>
            <person name="Baldwin S."/>
            <person name="Plunkett G. III"/>
            <person name="Burland V."/>
            <person name="Mau B."/>
            <person name="Petrosino J.F."/>
            <person name="Qin X."/>
            <person name="Muzny D.M."/>
            <person name="Ayele M."/>
            <person name="Gibbs R.A."/>
            <person name="Csorgo B."/>
            <person name="Posfai G."/>
            <person name="Weinstock G.M."/>
            <person name="Blattner F.R."/>
        </authorList>
    </citation>
    <scope>NUCLEOTIDE SEQUENCE [LARGE SCALE GENOMIC DNA]</scope>
    <source>
        <strain>K12 / DH10B</strain>
    </source>
</reference>